<feature type="chain" id="PRO_0000268955" description="HTH-type transcriptional repressor NsrR">
    <location>
        <begin position="1"/>
        <end position="141"/>
    </location>
</feature>
<feature type="domain" description="HTH rrf2-type" evidence="1">
    <location>
        <begin position="2"/>
        <end position="129"/>
    </location>
</feature>
<feature type="DNA-binding region" description="H-T-H motif" evidence="1">
    <location>
        <begin position="28"/>
        <end position="51"/>
    </location>
</feature>
<feature type="binding site" evidence="1">
    <location>
        <position position="91"/>
    </location>
    <ligand>
        <name>[2Fe-2S] cluster</name>
        <dbReference type="ChEBI" id="CHEBI:190135"/>
    </ligand>
</feature>
<feature type="binding site" evidence="1">
    <location>
        <position position="96"/>
    </location>
    <ligand>
        <name>[2Fe-2S] cluster</name>
        <dbReference type="ChEBI" id="CHEBI:190135"/>
    </ligand>
</feature>
<feature type="binding site" evidence="1">
    <location>
        <position position="102"/>
    </location>
    <ligand>
        <name>[2Fe-2S] cluster</name>
        <dbReference type="ChEBI" id="CHEBI:190135"/>
    </ligand>
</feature>
<evidence type="ECO:0000255" key="1">
    <source>
        <dbReference type="HAMAP-Rule" id="MF_01177"/>
    </source>
</evidence>
<evidence type="ECO:0000305" key="2"/>
<name>NSRR_YERPA</name>
<proteinExistence type="inferred from homology"/>
<comment type="function">
    <text evidence="1">Nitric oxide-sensitive repressor of genes involved in protecting the cell against nitrosative stress. May require iron for activity.</text>
</comment>
<comment type="cofactor">
    <cofactor evidence="1">
        <name>[2Fe-2S] cluster</name>
        <dbReference type="ChEBI" id="CHEBI:190135"/>
    </cofactor>
    <text evidence="1">Binds 1 [2Fe-2S] cluster per subunit.</text>
</comment>
<comment type="sequence caution" evidence="2">
    <conflict type="erroneous initiation">
        <sequence resource="EMBL-CDS" id="ABG15866"/>
    </conflict>
</comment>
<sequence>MQLTSFTDYGLRALIYMASLPDGQMTSISQVTEVYGVSRNHMVKIINQLSRVGLVTAVRGKNGGIRLGKPADQILIGDVVRQMEPLTLVNCSSDFCHITPACRLKQVLNQAVQSFLKELDNYTLADMVKDNSPLYKLLLVE</sequence>
<gene>
    <name evidence="1" type="primary">nsrR</name>
    <name type="ordered locus">YPA_3905</name>
</gene>
<accession>Q1C106</accession>
<protein>
    <recommendedName>
        <fullName evidence="1">HTH-type transcriptional repressor NsrR</fullName>
    </recommendedName>
</protein>
<organism>
    <name type="scientific">Yersinia pestis bv. Antiqua (strain Antiqua)</name>
    <dbReference type="NCBI Taxonomy" id="360102"/>
    <lineage>
        <taxon>Bacteria</taxon>
        <taxon>Pseudomonadati</taxon>
        <taxon>Pseudomonadota</taxon>
        <taxon>Gammaproteobacteria</taxon>
        <taxon>Enterobacterales</taxon>
        <taxon>Yersiniaceae</taxon>
        <taxon>Yersinia</taxon>
    </lineage>
</organism>
<reference key="1">
    <citation type="journal article" date="2006" name="J. Bacteriol.">
        <title>Complete genome sequence of Yersinia pestis strains Antiqua and Nepal516: evidence of gene reduction in an emerging pathogen.</title>
        <authorList>
            <person name="Chain P.S.G."/>
            <person name="Hu P."/>
            <person name="Malfatti S.A."/>
            <person name="Radnedge L."/>
            <person name="Larimer F."/>
            <person name="Vergez L.M."/>
            <person name="Worsham P."/>
            <person name="Chu M.C."/>
            <person name="Andersen G.L."/>
        </authorList>
    </citation>
    <scope>NUCLEOTIDE SEQUENCE [LARGE SCALE GENOMIC DNA]</scope>
    <source>
        <strain>Antiqua</strain>
    </source>
</reference>
<dbReference type="EMBL" id="CP000308">
    <property type="protein sequence ID" value="ABG15866.1"/>
    <property type="status" value="ALT_INIT"/>
    <property type="molecule type" value="Genomic_DNA"/>
</dbReference>
<dbReference type="RefSeq" id="WP_002217229.1">
    <property type="nucleotide sequence ID" value="NZ_CP009906.1"/>
</dbReference>
<dbReference type="SMR" id="Q1C106"/>
<dbReference type="GeneID" id="57974228"/>
<dbReference type="KEGG" id="ypa:YPA_3905"/>
<dbReference type="Proteomes" id="UP000001971">
    <property type="component" value="Chromosome"/>
</dbReference>
<dbReference type="GO" id="GO:0005829">
    <property type="term" value="C:cytosol"/>
    <property type="evidence" value="ECO:0007669"/>
    <property type="project" value="TreeGrafter"/>
</dbReference>
<dbReference type="GO" id="GO:0051537">
    <property type="term" value="F:2 iron, 2 sulfur cluster binding"/>
    <property type="evidence" value="ECO:0007669"/>
    <property type="project" value="UniProtKB-KW"/>
</dbReference>
<dbReference type="GO" id="GO:0003700">
    <property type="term" value="F:DNA-binding transcription factor activity"/>
    <property type="evidence" value="ECO:0007669"/>
    <property type="project" value="UniProtKB-UniRule"/>
</dbReference>
<dbReference type="GO" id="GO:0003690">
    <property type="term" value="F:double-stranded DNA binding"/>
    <property type="evidence" value="ECO:0007669"/>
    <property type="project" value="UniProtKB-UniRule"/>
</dbReference>
<dbReference type="GO" id="GO:0005506">
    <property type="term" value="F:iron ion binding"/>
    <property type="evidence" value="ECO:0007669"/>
    <property type="project" value="UniProtKB-UniRule"/>
</dbReference>
<dbReference type="GO" id="GO:0045892">
    <property type="term" value="P:negative regulation of DNA-templated transcription"/>
    <property type="evidence" value="ECO:0007669"/>
    <property type="project" value="InterPro"/>
</dbReference>
<dbReference type="FunFam" id="1.10.10.10:FF:000105">
    <property type="entry name" value="HTH-type transcriptional repressor NsrR"/>
    <property type="match status" value="1"/>
</dbReference>
<dbReference type="Gene3D" id="1.10.10.10">
    <property type="entry name" value="Winged helix-like DNA-binding domain superfamily/Winged helix DNA-binding domain"/>
    <property type="match status" value="1"/>
</dbReference>
<dbReference type="HAMAP" id="MF_01177">
    <property type="entry name" value="HTH_type_NsrR"/>
    <property type="match status" value="1"/>
</dbReference>
<dbReference type="InterPro" id="IPR030489">
    <property type="entry name" value="TR_Rrf2-type_CS"/>
</dbReference>
<dbReference type="InterPro" id="IPR000944">
    <property type="entry name" value="Tscrpt_reg_Rrf2"/>
</dbReference>
<dbReference type="InterPro" id="IPR023761">
    <property type="entry name" value="Tscrpt_rep_HTH_NsrR"/>
</dbReference>
<dbReference type="InterPro" id="IPR036388">
    <property type="entry name" value="WH-like_DNA-bd_sf"/>
</dbReference>
<dbReference type="InterPro" id="IPR036390">
    <property type="entry name" value="WH_DNA-bd_sf"/>
</dbReference>
<dbReference type="NCBIfam" id="NF008240">
    <property type="entry name" value="PRK11014.1"/>
    <property type="match status" value="1"/>
</dbReference>
<dbReference type="NCBIfam" id="TIGR00738">
    <property type="entry name" value="rrf2_super"/>
    <property type="match status" value="1"/>
</dbReference>
<dbReference type="PANTHER" id="PTHR33221:SF4">
    <property type="entry name" value="HTH-TYPE TRANSCRIPTIONAL REPRESSOR NSRR"/>
    <property type="match status" value="1"/>
</dbReference>
<dbReference type="PANTHER" id="PTHR33221">
    <property type="entry name" value="WINGED HELIX-TURN-HELIX TRANSCRIPTIONAL REGULATOR, RRF2 FAMILY"/>
    <property type="match status" value="1"/>
</dbReference>
<dbReference type="Pfam" id="PF02082">
    <property type="entry name" value="Rrf2"/>
    <property type="match status" value="1"/>
</dbReference>
<dbReference type="SUPFAM" id="SSF46785">
    <property type="entry name" value="Winged helix' DNA-binding domain"/>
    <property type="match status" value="1"/>
</dbReference>
<dbReference type="PROSITE" id="PS01332">
    <property type="entry name" value="HTH_RRF2_1"/>
    <property type="match status" value="1"/>
</dbReference>
<dbReference type="PROSITE" id="PS51197">
    <property type="entry name" value="HTH_RRF2_2"/>
    <property type="match status" value="1"/>
</dbReference>
<keyword id="KW-0001">2Fe-2S</keyword>
<keyword id="KW-0238">DNA-binding</keyword>
<keyword id="KW-0408">Iron</keyword>
<keyword id="KW-0411">Iron-sulfur</keyword>
<keyword id="KW-0479">Metal-binding</keyword>
<keyword id="KW-0678">Repressor</keyword>
<keyword id="KW-0804">Transcription</keyword>
<keyword id="KW-0805">Transcription regulation</keyword>